<proteinExistence type="evidence at protein level"/>
<keyword id="KW-1203">Blood coagulation cascade inhibiting toxin</keyword>
<keyword id="KW-0903">Direct protein sequencing</keyword>
<keyword id="KW-1015">Disulfide bond</keyword>
<keyword id="KW-1199">Hemostasis impairing toxin</keyword>
<keyword id="KW-0646">Protease inhibitor</keyword>
<keyword id="KW-0964">Secreted</keyword>
<keyword id="KW-0722">Serine protease inhibitor</keyword>
<keyword id="KW-0732">Signal</keyword>
<keyword id="KW-0800">Toxin</keyword>
<organism>
    <name type="scientific">Vespa bicolor</name>
    <name type="common">Black shield wasp</name>
    <dbReference type="NCBI Taxonomy" id="619325"/>
    <lineage>
        <taxon>Eukaryota</taxon>
        <taxon>Metazoa</taxon>
        <taxon>Ecdysozoa</taxon>
        <taxon>Arthropoda</taxon>
        <taxon>Hexapoda</taxon>
        <taxon>Insecta</taxon>
        <taxon>Pterygota</taxon>
        <taxon>Neoptera</taxon>
        <taxon>Endopterygota</taxon>
        <taxon>Hymenoptera</taxon>
        <taxon>Apocrita</taxon>
        <taxon>Aculeata</taxon>
        <taxon>Vespoidea</taxon>
        <taxon>Vespidae</taxon>
        <taxon>Vespinae</taxon>
        <taxon>Vespa</taxon>
    </lineage>
</organism>
<comment type="function">
    <text>Serine protease inhibitor that inhibits trypsin (Ki=550 nM) and thrombin (Ki=26000 nM). Exerts anticoagulant activity probably by the way of inhibiting thrombin.</text>
</comment>
<comment type="subcellular location">
    <subcellularLocation>
        <location>Secreted</location>
    </subcellularLocation>
</comment>
<comment type="tissue specificity">
    <text>Expressed by the venom gland.</text>
</comment>
<comment type="mass spectrometry" mass="5749.4" method="MALDI" evidence="2"/>
<comment type="miscellaneous">
    <text evidence="4">Negative results: does not show inhibition on elastase and chymotrypsin.</text>
</comment>
<comment type="similarity">
    <text evidence="3">Belongs to the venom Kunitz-type family.</text>
</comment>
<feature type="signal peptide">
    <location>
        <begin position="1"/>
        <end position="24"/>
    </location>
</feature>
<feature type="chain" id="PRO_0000429465" description="Kunitz-type serine protease inhibitor bicolin">
    <location>
        <begin position="25"/>
        <end position="77"/>
    </location>
</feature>
<feature type="domain" description="BPTI/Kunitz inhibitor" evidence="1">
    <location>
        <begin position="28"/>
        <end position="76"/>
    </location>
</feature>
<feature type="site" description="Reactive bond homolog">
    <location>
        <begin position="40"/>
        <end position="41"/>
    </location>
</feature>
<feature type="disulfide bond" evidence="1">
    <location>
        <begin position="28"/>
        <end position="76"/>
    </location>
</feature>
<feature type="disulfide bond" evidence="1">
    <location>
        <begin position="37"/>
        <end position="59"/>
    </location>
</feature>
<feature type="disulfide bond" evidence="1">
    <location>
        <begin position="51"/>
        <end position="72"/>
    </location>
</feature>
<dbReference type="EMBL" id="FJ749250">
    <property type="protein sequence ID" value="ACN58230.1"/>
    <property type="molecule type" value="mRNA"/>
</dbReference>
<dbReference type="SMR" id="C0LNR2"/>
<dbReference type="MEROPS" id="I02.972"/>
<dbReference type="GO" id="GO:0005615">
    <property type="term" value="C:extracellular space"/>
    <property type="evidence" value="ECO:0007669"/>
    <property type="project" value="TreeGrafter"/>
</dbReference>
<dbReference type="GO" id="GO:0004867">
    <property type="term" value="F:serine-type endopeptidase inhibitor activity"/>
    <property type="evidence" value="ECO:0007669"/>
    <property type="project" value="UniProtKB-KW"/>
</dbReference>
<dbReference type="GO" id="GO:0090729">
    <property type="term" value="F:toxin activity"/>
    <property type="evidence" value="ECO:0007669"/>
    <property type="project" value="UniProtKB-KW"/>
</dbReference>
<dbReference type="CDD" id="cd00109">
    <property type="entry name" value="Kunitz-type"/>
    <property type="match status" value="1"/>
</dbReference>
<dbReference type="Gene3D" id="4.10.410.10">
    <property type="entry name" value="Pancreatic trypsin inhibitor Kunitz domain"/>
    <property type="match status" value="1"/>
</dbReference>
<dbReference type="InterPro" id="IPR002223">
    <property type="entry name" value="Kunitz_BPTI"/>
</dbReference>
<dbReference type="InterPro" id="IPR036880">
    <property type="entry name" value="Kunitz_BPTI_sf"/>
</dbReference>
<dbReference type="InterPro" id="IPR050098">
    <property type="entry name" value="TFPI/VKTCI-like"/>
</dbReference>
<dbReference type="PANTHER" id="PTHR10083:SF374">
    <property type="entry name" value="BPTI_KUNITZ INHIBITOR DOMAIN-CONTAINING PROTEIN"/>
    <property type="match status" value="1"/>
</dbReference>
<dbReference type="PANTHER" id="PTHR10083">
    <property type="entry name" value="KUNITZ-TYPE PROTEASE INHIBITOR-RELATED"/>
    <property type="match status" value="1"/>
</dbReference>
<dbReference type="Pfam" id="PF00014">
    <property type="entry name" value="Kunitz_BPTI"/>
    <property type="match status" value="1"/>
</dbReference>
<dbReference type="PRINTS" id="PR00759">
    <property type="entry name" value="BASICPTASE"/>
</dbReference>
<dbReference type="SMART" id="SM00131">
    <property type="entry name" value="KU"/>
    <property type="match status" value="1"/>
</dbReference>
<dbReference type="SUPFAM" id="SSF57362">
    <property type="entry name" value="BPTI-like"/>
    <property type="match status" value="1"/>
</dbReference>
<dbReference type="PROSITE" id="PS50279">
    <property type="entry name" value="BPTI_KUNITZ_2"/>
    <property type="match status" value="1"/>
</dbReference>
<reference key="1">
    <citation type="journal article" date="2009" name="Comp. Biochem. Physiol.">
        <title>A novel serine protease inhibitor from the venom of Vespa bicolor Fabricius.</title>
        <authorList>
            <person name="Yang X."/>
            <person name="Wang Y."/>
            <person name="Lu Z."/>
            <person name="Zhai L."/>
            <person name="Jiang J."/>
            <person name="Liu J."/>
            <person name="Yu H."/>
        </authorList>
    </citation>
    <scope>NUCLEOTIDE SEQUENCE [MRNA]</scope>
    <scope>PARTIAL PROTEIN SEQUENCE</scope>
    <scope>MASS SPECTROMETRY</scope>
    <source>
        <tissue>Venom</tissue>
        <tissue>Venom gland</tissue>
    </source>
</reference>
<evidence type="ECO:0000255" key="1">
    <source>
        <dbReference type="PROSITE-ProRule" id="PRU00031"/>
    </source>
</evidence>
<evidence type="ECO:0000269" key="2">
    <source>
    </source>
</evidence>
<evidence type="ECO:0000305" key="3"/>
<evidence type="ECO:0000305" key="4">
    <source>
    </source>
</evidence>
<sequence length="77" mass="8141">MNAKILALLIGVVFVGLFTVSTPAHPLCLLDPPFGFCQSSISRFAPVVGKCREYIYGGCSGKANNFQAQAKCQANCG</sequence>
<accession>C0LNR2</accession>
<protein>
    <recommendedName>
        <fullName>Kunitz-type serine protease inhibitor bicolin</fullName>
    </recommendedName>
</protein>
<name>VKT_VESBI</name>